<sequence length="262" mass="29601">MKTPFGKTPGQRSRADAGHAGVSANMMKKRTSHKKHRSSVGPSKPVSQPRRNIVGCRIQHGWKEGNGPVTQWKGTVLDQVPVNPSLYLIKYDGFDCVYGLELNKDERVSALEVLPDRVATSRISDAHLADTMIGKAVEHMFETEDGSKDEWRGMVLARAPVMNTWFYITYEKDPVLYMYQLLDDYKEGDLRIMPDSNDSPPAEREPGEVVDSLVGKQVEYAKEDGSKRTGMVIHQVEAKPSVYFIKFDDDFHIYVYDLVKTS</sequence>
<organism>
    <name type="scientific">Pongo abelii</name>
    <name type="common">Sumatran orangutan</name>
    <name type="synonym">Pongo pygmaeus abelii</name>
    <dbReference type="NCBI Taxonomy" id="9601"/>
    <lineage>
        <taxon>Eukaryota</taxon>
        <taxon>Metazoa</taxon>
        <taxon>Chordata</taxon>
        <taxon>Craniata</taxon>
        <taxon>Vertebrata</taxon>
        <taxon>Euteleostomi</taxon>
        <taxon>Mammalia</taxon>
        <taxon>Eutheria</taxon>
        <taxon>Euarchontoglires</taxon>
        <taxon>Primates</taxon>
        <taxon>Haplorrhini</taxon>
        <taxon>Catarrhini</taxon>
        <taxon>Hominidae</taxon>
        <taxon>Pongo</taxon>
    </lineage>
</organism>
<gene>
    <name type="primary">SPIN1</name>
    <name type="synonym">SPIN</name>
</gene>
<accession>Q5R997</accession>
<evidence type="ECO:0000250" key="1"/>
<evidence type="ECO:0000250" key="2">
    <source>
        <dbReference type="UniProtKB" id="Q61142"/>
    </source>
</evidence>
<evidence type="ECO:0000250" key="3">
    <source>
        <dbReference type="UniProtKB" id="Q9Y657"/>
    </source>
</evidence>
<evidence type="ECO:0000256" key="4">
    <source>
        <dbReference type="SAM" id="MobiDB-lite"/>
    </source>
</evidence>
<evidence type="ECO:0000305" key="5"/>
<protein>
    <recommendedName>
        <fullName>Spindlin-1</fullName>
    </recommendedName>
    <alternativeName>
        <fullName>Spindlin1</fullName>
    </alternativeName>
</protein>
<proteinExistence type="evidence at transcript level"/>
<name>SPIN1_PONAB</name>
<feature type="chain" id="PRO_0000232666" description="Spindlin-1">
    <location>
        <begin position="1"/>
        <end position="262"/>
    </location>
</feature>
<feature type="region of interest" description="Disordered" evidence="4">
    <location>
        <begin position="1"/>
        <end position="51"/>
    </location>
</feature>
<feature type="region of interest" description="Tudor-like domain 1" evidence="1">
    <location>
        <begin position="53"/>
        <end position="116"/>
    </location>
</feature>
<feature type="region of interest" description="Histone H3K4me3 and H3R8me2a binding" evidence="1">
    <location>
        <begin position="93"/>
        <end position="98"/>
    </location>
</feature>
<feature type="region of interest" description="Tudor-like domain 2" evidence="1">
    <location>
        <begin position="132"/>
        <end position="193"/>
    </location>
</feature>
<feature type="region of interest" description="Histone H3K4me3 and H3R8me2a binding" evidence="1">
    <location>
        <position position="142"/>
    </location>
</feature>
<feature type="region of interest" description="Tudor-like domain 3" evidence="1">
    <location>
        <begin position="213"/>
        <end position="262"/>
    </location>
</feature>
<feature type="region of interest" description="Histone H3K4me3 and H3R8me2a binding" evidence="1">
    <location>
        <begin position="250"/>
        <end position="252"/>
    </location>
</feature>
<feature type="compositionally biased region" description="Basic residues" evidence="4">
    <location>
        <begin position="27"/>
        <end position="38"/>
    </location>
</feature>
<feature type="site" description="Histone H3K4me3 and H3R8me2a binding" evidence="1">
    <location>
        <position position="173"/>
    </location>
</feature>
<feature type="site" description="Histone H3K4me3 and H3R8me2a binding" evidence="1">
    <location>
        <position position="180"/>
    </location>
</feature>
<feature type="site" description="Histone H3K4me3 and H3R8me2a binding" evidence="1">
    <location>
        <position position="184"/>
    </location>
</feature>
<feature type="modified residue" description="N6-acetyllysine; alternate" evidence="2">
    <location>
        <position position="44"/>
    </location>
</feature>
<feature type="modified residue" description="Phosphoserine; by AURKA" evidence="3">
    <location>
        <position position="109"/>
    </location>
</feature>
<feature type="modified residue" description="Phosphoserine; by AURKA" evidence="3">
    <location>
        <position position="124"/>
    </location>
</feature>
<feature type="modified residue" description="Phosphoserine" evidence="3">
    <location>
        <position position="199"/>
    </location>
</feature>
<feature type="cross-link" description="Glycyl lysine isopeptide (Lys-Gly) (interchain with G-Cter in SUMO2)" evidence="3">
    <location>
        <position position="7"/>
    </location>
</feature>
<feature type="cross-link" description="Glycyl lysine isopeptide (Lys-Gly) (interchain with G-Cter in SUMO2)" evidence="3">
    <location>
        <position position="28"/>
    </location>
</feature>
<feature type="cross-link" description="Glycyl lysine isopeptide (Lys-Gly) (interchain with G-Cter in SUMO2); alternate" evidence="3">
    <location>
        <position position="44"/>
    </location>
</feature>
<reference key="1">
    <citation type="submission" date="2004-11" db="EMBL/GenBank/DDBJ databases">
        <authorList>
            <consortium name="The German cDNA consortium"/>
        </authorList>
    </citation>
    <scope>NUCLEOTIDE SEQUENCE [LARGE SCALE MRNA]</scope>
    <source>
        <tissue>Brain cortex</tissue>
    </source>
</reference>
<keyword id="KW-0007">Acetylation</keyword>
<keyword id="KW-0131">Cell cycle</keyword>
<keyword id="KW-0156">Chromatin regulator</keyword>
<keyword id="KW-0217">Developmental protein</keyword>
<keyword id="KW-0238">DNA-binding</keyword>
<keyword id="KW-1017">Isopeptide bond</keyword>
<keyword id="KW-0469">Meiosis</keyword>
<keyword id="KW-0539">Nucleus</keyword>
<keyword id="KW-0597">Phosphoprotein</keyword>
<keyword id="KW-1185">Reference proteome</keyword>
<keyword id="KW-0677">Repeat</keyword>
<keyword id="KW-0832">Ubl conjugation</keyword>
<keyword id="KW-0879">Wnt signaling pathway</keyword>
<dbReference type="EMBL" id="CR860315">
    <property type="protein sequence ID" value="CAH92452.1"/>
    <property type="molecule type" value="mRNA"/>
</dbReference>
<dbReference type="EMBL" id="CR859493">
    <property type="protein sequence ID" value="CAH91663.1"/>
    <property type="molecule type" value="mRNA"/>
</dbReference>
<dbReference type="RefSeq" id="NP_001126446.1">
    <property type="nucleotide sequence ID" value="NM_001132974.2"/>
</dbReference>
<dbReference type="RefSeq" id="XP_009242866.1">
    <property type="nucleotide sequence ID" value="XM_009244591.1"/>
</dbReference>
<dbReference type="RefSeq" id="XP_009242867.1">
    <property type="nucleotide sequence ID" value="XM_009244592.1"/>
</dbReference>
<dbReference type="RefSeq" id="XP_009242868.1">
    <property type="nucleotide sequence ID" value="XM_009244593.4"/>
</dbReference>
<dbReference type="RefSeq" id="XP_009242869.1">
    <property type="nucleotide sequence ID" value="XM_009244594.1"/>
</dbReference>
<dbReference type="RefSeq" id="XP_009242870.1">
    <property type="nucleotide sequence ID" value="XM_009244595.1"/>
</dbReference>
<dbReference type="RefSeq" id="XP_009242871.1">
    <property type="nucleotide sequence ID" value="XM_009244596.1"/>
</dbReference>
<dbReference type="RefSeq" id="XP_009242872.1">
    <property type="nucleotide sequence ID" value="XM_009244597.1"/>
</dbReference>
<dbReference type="RefSeq" id="XP_054375436.1">
    <property type="nucleotide sequence ID" value="XM_054519461.2"/>
</dbReference>
<dbReference type="RefSeq" id="XP_063569962.1">
    <property type="nucleotide sequence ID" value="XM_063713892.1"/>
</dbReference>
<dbReference type="RefSeq" id="XP_063569963.1">
    <property type="nucleotide sequence ID" value="XM_063713893.1"/>
</dbReference>
<dbReference type="RefSeq" id="XP_063569964.1">
    <property type="nucleotide sequence ID" value="XM_063713894.1"/>
</dbReference>
<dbReference type="RefSeq" id="XP_063569965.1">
    <property type="nucleotide sequence ID" value="XM_063713895.1"/>
</dbReference>
<dbReference type="RefSeq" id="XP_063569966.1">
    <property type="nucleotide sequence ID" value="XM_063713896.1"/>
</dbReference>
<dbReference type="SMR" id="Q5R997"/>
<dbReference type="FunCoup" id="Q5R997">
    <property type="interactions" value="2966"/>
</dbReference>
<dbReference type="STRING" id="9601.ENSPPYP00000021687"/>
<dbReference type="Ensembl" id="ENSPPYT00000022574.3">
    <property type="protein sequence ID" value="ENSPPYP00000021687.2"/>
    <property type="gene ID" value="ENSPPYG00000019355.3"/>
</dbReference>
<dbReference type="GeneID" id="100173430"/>
<dbReference type="KEGG" id="pon:100173430"/>
<dbReference type="CTD" id="10927"/>
<dbReference type="eggNOG" id="ENOG502QRYD">
    <property type="taxonomic scope" value="Eukaryota"/>
</dbReference>
<dbReference type="GeneTree" id="ENSGT00950000182925"/>
<dbReference type="HOGENOM" id="CLU_068595_0_0_1"/>
<dbReference type="InParanoid" id="Q5R997"/>
<dbReference type="OMA" id="CMCEYRK"/>
<dbReference type="OrthoDB" id="9944558at2759"/>
<dbReference type="TreeFam" id="TF332665"/>
<dbReference type="Proteomes" id="UP000001595">
    <property type="component" value="Chromosome 9"/>
</dbReference>
<dbReference type="GO" id="GO:0005829">
    <property type="term" value="C:cytosol"/>
    <property type="evidence" value="ECO:0007669"/>
    <property type="project" value="Ensembl"/>
</dbReference>
<dbReference type="GO" id="GO:0031965">
    <property type="term" value="C:nuclear membrane"/>
    <property type="evidence" value="ECO:0007669"/>
    <property type="project" value="Ensembl"/>
</dbReference>
<dbReference type="GO" id="GO:0005730">
    <property type="term" value="C:nucleolus"/>
    <property type="evidence" value="ECO:0000250"/>
    <property type="project" value="UniProtKB"/>
</dbReference>
<dbReference type="GO" id="GO:0005654">
    <property type="term" value="C:nucleoplasm"/>
    <property type="evidence" value="ECO:0007669"/>
    <property type="project" value="Ensembl"/>
</dbReference>
<dbReference type="GO" id="GO:0005634">
    <property type="term" value="C:nucleus"/>
    <property type="evidence" value="ECO:0000250"/>
    <property type="project" value="UniProtKB"/>
</dbReference>
<dbReference type="GO" id="GO:0003677">
    <property type="term" value="F:DNA binding"/>
    <property type="evidence" value="ECO:0007669"/>
    <property type="project" value="UniProtKB-KW"/>
</dbReference>
<dbReference type="GO" id="GO:0140002">
    <property type="term" value="F:histone H3K4me3 reader activity"/>
    <property type="evidence" value="ECO:0000250"/>
    <property type="project" value="UniProtKB"/>
</dbReference>
<dbReference type="GO" id="GO:0035064">
    <property type="term" value="F:methylated histone binding"/>
    <property type="evidence" value="ECO:0007669"/>
    <property type="project" value="Ensembl"/>
</dbReference>
<dbReference type="GO" id="GO:0007276">
    <property type="term" value="P:gamete generation"/>
    <property type="evidence" value="ECO:0007669"/>
    <property type="project" value="InterPro"/>
</dbReference>
<dbReference type="GO" id="GO:0051321">
    <property type="term" value="P:meiotic cell cycle"/>
    <property type="evidence" value="ECO:0007669"/>
    <property type="project" value="UniProtKB-KW"/>
</dbReference>
<dbReference type="GO" id="GO:0045893">
    <property type="term" value="P:positive regulation of DNA-templated transcription"/>
    <property type="evidence" value="ECO:0000250"/>
    <property type="project" value="UniProtKB"/>
</dbReference>
<dbReference type="GO" id="GO:0030177">
    <property type="term" value="P:positive regulation of Wnt signaling pathway"/>
    <property type="evidence" value="ECO:0000250"/>
    <property type="project" value="UniProtKB"/>
</dbReference>
<dbReference type="GO" id="GO:0009303">
    <property type="term" value="P:rRNA transcription"/>
    <property type="evidence" value="ECO:0000250"/>
    <property type="project" value="UniProtKB"/>
</dbReference>
<dbReference type="GO" id="GO:0016055">
    <property type="term" value="P:Wnt signaling pathway"/>
    <property type="evidence" value="ECO:0007669"/>
    <property type="project" value="UniProtKB-KW"/>
</dbReference>
<dbReference type="FunFam" id="2.80.10.70:FF:000001">
    <property type="entry name" value="Spindlin 1"/>
    <property type="match status" value="1"/>
</dbReference>
<dbReference type="Gene3D" id="2.80.10.70">
    <property type="entry name" value="Spindlin/Ssty"/>
    <property type="match status" value="1"/>
</dbReference>
<dbReference type="InterPro" id="IPR003671">
    <property type="entry name" value="SPIN/Ssty"/>
</dbReference>
<dbReference type="InterPro" id="IPR042567">
    <property type="entry name" value="SPIN/Ssty_sf"/>
</dbReference>
<dbReference type="PANTHER" id="PTHR10405">
    <property type="entry name" value="SPINDLIN"/>
    <property type="match status" value="1"/>
</dbReference>
<dbReference type="Pfam" id="PF02513">
    <property type="entry name" value="Spin-Ssty"/>
    <property type="match status" value="3"/>
</dbReference>
<comment type="function">
    <text evidence="3">Chromatin reader that specifically recognizes and binds histone H3 both trimethylated at 'Lys-4' and asymmetrically dimethylated at 'Arg-8' (H3K4me3 and H3R8me2a) and acts as an activator of Wnt signaling pathway downstream of PRMT2. In case of cancer, promotes cell cancer proliferation via activation of the Wnt signaling pathway. Overexpression induces metaphase arrest and chromosomal instability. Localizes to active rDNA loci and promotes the expression of rRNA genes. May play a role in cell-cycle regulation during the transition from gamete to embryo. Involved in oocyte meiotic resumption, a process that takes place before ovulation to resume meiosis of oocytes blocked in prophase I: may act by regulating maternal transcripts to control meiotic resumption.</text>
</comment>
<comment type="subunit">
    <text evidence="2 3">Homodimer; may form higher-order oligomers. Interacts with TCF7L2/TCF4; the interaction is direct. Interacts with HABP4 and SERBP1. Interacts with C11orf84/SPINDOC.</text>
</comment>
<comment type="subcellular location">
    <subcellularLocation>
        <location evidence="3">Nucleus</location>
    </subcellularLocation>
    <subcellularLocation>
        <location evidence="3">Nucleus</location>
        <location evidence="3">Nucleolus</location>
    </subcellularLocation>
</comment>
<comment type="domain">
    <text evidence="3">The 3 tudor-like domains (also named Spin/Ssty repeats) specifically recognize and bind methylated histones. H3K4me3 and H3R8me2a are recognized by tudor-like domains 2 and 1, respectively.</text>
</comment>
<comment type="PTM">
    <text evidence="2">Phosphorylated during oocyte meiotic maturation.</text>
</comment>
<comment type="similarity">
    <text evidence="5">Belongs to the SPIN/STSY family.</text>
</comment>